<dbReference type="EC" id="2.1.1.199" evidence="1"/>
<dbReference type="EMBL" id="AY142813">
    <property type="protein sequence ID" value="AAN87417.1"/>
    <property type="molecule type" value="Genomic_DNA"/>
</dbReference>
<dbReference type="RefSeq" id="WP_155474664.1">
    <property type="nucleotide sequence ID" value="NZ_WNKU01000001.1"/>
</dbReference>
<dbReference type="SMR" id="Q8GE08"/>
<dbReference type="OrthoDB" id="9806637at2"/>
<dbReference type="GO" id="GO:0005737">
    <property type="term" value="C:cytoplasm"/>
    <property type="evidence" value="ECO:0007669"/>
    <property type="project" value="UniProtKB-SubCell"/>
</dbReference>
<dbReference type="GO" id="GO:0071424">
    <property type="term" value="F:rRNA (cytosine-N4-)-methyltransferase activity"/>
    <property type="evidence" value="ECO:0007669"/>
    <property type="project" value="TreeGrafter"/>
</dbReference>
<dbReference type="GO" id="GO:0070475">
    <property type="term" value="P:rRNA base methylation"/>
    <property type="evidence" value="ECO:0007669"/>
    <property type="project" value="TreeGrafter"/>
</dbReference>
<dbReference type="FunFam" id="1.10.150.170:FF:000001">
    <property type="entry name" value="Ribosomal RNA small subunit methyltransferase H"/>
    <property type="match status" value="1"/>
</dbReference>
<dbReference type="Gene3D" id="1.10.150.170">
    <property type="entry name" value="Putative methyltransferase TM0872, insert domain"/>
    <property type="match status" value="1"/>
</dbReference>
<dbReference type="Gene3D" id="3.40.50.150">
    <property type="entry name" value="Vaccinia Virus protein VP39"/>
    <property type="match status" value="1"/>
</dbReference>
<dbReference type="HAMAP" id="MF_01007">
    <property type="entry name" value="16SrRNA_methyltr_H"/>
    <property type="match status" value="1"/>
</dbReference>
<dbReference type="InterPro" id="IPR002903">
    <property type="entry name" value="RsmH"/>
</dbReference>
<dbReference type="InterPro" id="IPR023397">
    <property type="entry name" value="SAM-dep_MeTrfase_MraW_recog"/>
</dbReference>
<dbReference type="InterPro" id="IPR029063">
    <property type="entry name" value="SAM-dependent_MTases_sf"/>
</dbReference>
<dbReference type="NCBIfam" id="TIGR00006">
    <property type="entry name" value="16S rRNA (cytosine(1402)-N(4))-methyltransferase RsmH"/>
    <property type="match status" value="1"/>
</dbReference>
<dbReference type="PANTHER" id="PTHR11265:SF0">
    <property type="entry name" value="12S RRNA N4-METHYLCYTIDINE METHYLTRANSFERASE"/>
    <property type="match status" value="1"/>
</dbReference>
<dbReference type="PANTHER" id="PTHR11265">
    <property type="entry name" value="S-ADENOSYL-METHYLTRANSFERASE MRAW"/>
    <property type="match status" value="1"/>
</dbReference>
<dbReference type="Pfam" id="PF01795">
    <property type="entry name" value="Methyltransf_5"/>
    <property type="match status" value="1"/>
</dbReference>
<dbReference type="PIRSF" id="PIRSF004486">
    <property type="entry name" value="MraW"/>
    <property type="match status" value="1"/>
</dbReference>
<dbReference type="SUPFAM" id="SSF81799">
    <property type="entry name" value="Putative methyltransferase TM0872, insert domain"/>
    <property type="match status" value="1"/>
</dbReference>
<dbReference type="SUPFAM" id="SSF53335">
    <property type="entry name" value="S-adenosyl-L-methionine-dependent methyltransferases"/>
    <property type="match status" value="1"/>
</dbReference>
<organism>
    <name type="scientific">Heliobacterium mobile</name>
    <name type="common">Heliobacillus mobilis</name>
    <dbReference type="NCBI Taxonomy" id="28064"/>
    <lineage>
        <taxon>Bacteria</taxon>
        <taxon>Bacillati</taxon>
        <taxon>Bacillota</taxon>
        <taxon>Clostridia</taxon>
        <taxon>Eubacteriales</taxon>
        <taxon>Heliobacteriaceae</taxon>
        <taxon>Heliobacterium</taxon>
    </lineage>
</organism>
<protein>
    <recommendedName>
        <fullName evidence="1">Ribosomal RNA small subunit methyltransferase H</fullName>
        <ecNumber evidence="1">2.1.1.199</ecNumber>
    </recommendedName>
    <alternativeName>
        <fullName evidence="1">16S rRNA m(4)C1402 methyltransferase</fullName>
    </alternativeName>
    <alternativeName>
        <fullName evidence="1">rRNA (cytosine-N(4)-)-methyltransferase RsmH</fullName>
    </alternativeName>
</protein>
<evidence type="ECO:0000255" key="1">
    <source>
        <dbReference type="HAMAP-Rule" id="MF_01007"/>
    </source>
</evidence>
<keyword id="KW-0963">Cytoplasm</keyword>
<keyword id="KW-0489">Methyltransferase</keyword>
<keyword id="KW-0698">rRNA processing</keyword>
<keyword id="KW-0949">S-adenosyl-L-methionine</keyword>
<keyword id="KW-0808">Transferase</keyword>
<gene>
    <name evidence="1" type="primary">rsmH</name>
    <name type="synonym">mraW</name>
</gene>
<accession>Q8GE08</accession>
<comment type="function">
    <text evidence="1">Specifically methylates the N4 position of cytidine in position 1402 (C1402) of 16S rRNA.</text>
</comment>
<comment type="catalytic activity">
    <reaction evidence="1">
        <text>cytidine(1402) in 16S rRNA + S-adenosyl-L-methionine = N(4)-methylcytidine(1402) in 16S rRNA + S-adenosyl-L-homocysteine + H(+)</text>
        <dbReference type="Rhea" id="RHEA:42928"/>
        <dbReference type="Rhea" id="RHEA-COMP:10286"/>
        <dbReference type="Rhea" id="RHEA-COMP:10287"/>
        <dbReference type="ChEBI" id="CHEBI:15378"/>
        <dbReference type="ChEBI" id="CHEBI:57856"/>
        <dbReference type="ChEBI" id="CHEBI:59789"/>
        <dbReference type="ChEBI" id="CHEBI:74506"/>
        <dbReference type="ChEBI" id="CHEBI:82748"/>
        <dbReference type="EC" id="2.1.1.199"/>
    </reaction>
</comment>
<comment type="subcellular location">
    <subcellularLocation>
        <location evidence="1">Cytoplasm</location>
    </subcellularLocation>
</comment>
<comment type="similarity">
    <text evidence="1">Belongs to the methyltransferase superfamily. RsmH family.</text>
</comment>
<name>RSMH_HELMO</name>
<sequence>MEFHHIPVLLEEVLEALQPRPDGLYLDGTVGGGGHSAAILEKTAGQGRLIGLDQDPRALAAARIKLEKFADQVTLVRSNFRQLGSVVEELGQKGKIDGILLDIGVSSHQLDEAERGFTYRAEAPLDMRMNPDGAVTAAQILNEYPEGEIFRILWEYGEERWSKRIAQFIVNRRTEQPLASTTDLVDVIRAAIPAAARQEGGHPAKRTFQALRIAVNDELGALQEALPAALDALAPSGRLAVISFHSLEDRIVKNFFAEQAKGCTCPPDMPVCGCGKKARLKIITRKPITGSEEELKINPRSQSAKLRVAQKI</sequence>
<feature type="chain" id="PRO_0000108637" description="Ribosomal RNA small subunit methyltransferase H">
    <location>
        <begin position="1"/>
        <end position="312" status="greater than"/>
    </location>
</feature>
<feature type="binding site" evidence="1">
    <location>
        <begin position="33"/>
        <end position="35"/>
    </location>
    <ligand>
        <name>S-adenosyl-L-methionine</name>
        <dbReference type="ChEBI" id="CHEBI:59789"/>
    </ligand>
</feature>
<feature type="binding site" evidence="1">
    <location>
        <position position="53"/>
    </location>
    <ligand>
        <name>S-adenosyl-L-methionine</name>
        <dbReference type="ChEBI" id="CHEBI:59789"/>
    </ligand>
</feature>
<feature type="binding site" evidence="1">
    <location>
        <position position="80"/>
    </location>
    <ligand>
        <name>S-adenosyl-L-methionine</name>
        <dbReference type="ChEBI" id="CHEBI:59789"/>
    </ligand>
</feature>
<feature type="binding site" evidence="1">
    <location>
        <position position="102"/>
    </location>
    <ligand>
        <name>S-adenosyl-L-methionine</name>
        <dbReference type="ChEBI" id="CHEBI:59789"/>
    </ligand>
</feature>
<feature type="binding site" evidence="1">
    <location>
        <position position="109"/>
    </location>
    <ligand>
        <name>S-adenosyl-L-methionine</name>
        <dbReference type="ChEBI" id="CHEBI:59789"/>
    </ligand>
</feature>
<feature type="non-terminal residue">
    <location>
        <position position="312"/>
    </location>
</feature>
<proteinExistence type="inferred from homology"/>
<reference key="1">
    <citation type="journal article" date="2002" name="Science">
        <title>Whole-genome analysis of photosynthetic prokaryotes.</title>
        <authorList>
            <person name="Raymond J."/>
            <person name="Zhaxybayeva O."/>
            <person name="Gogarten J.P."/>
            <person name="Gerdes S.Y."/>
            <person name="Blankenship R.E."/>
        </authorList>
    </citation>
    <scope>NUCLEOTIDE SEQUENCE [GENOMIC DNA]</scope>
</reference>